<comment type="function">
    <text evidence="1">Activates expression of the rhaSR operon in response to L-rhamnose.</text>
</comment>
<comment type="subunit">
    <text evidence="1">Binds DNA as a dimer.</text>
</comment>
<comment type="subcellular location">
    <subcellularLocation>
        <location evidence="1">Cytoplasm</location>
    </subcellularLocation>
</comment>
<comment type="sequence caution" evidence="2">
    <conflict type="frameshift">
        <sequence resource="EMBL" id="M85157"/>
    </conflict>
</comment>
<evidence type="ECO:0000255" key="1">
    <source>
        <dbReference type="HAMAP-Rule" id="MF_01533"/>
    </source>
</evidence>
<evidence type="ECO:0000305" key="2"/>
<gene>
    <name evidence="1" type="primary">rhaR</name>
    <name type="synonym">rhaC1</name>
    <name type="ordered locus">STM4049</name>
</gene>
<accession>P40865</accession>
<organism>
    <name type="scientific">Salmonella typhimurium (strain LT2 / SGSC1412 / ATCC 700720)</name>
    <dbReference type="NCBI Taxonomy" id="99287"/>
    <lineage>
        <taxon>Bacteria</taxon>
        <taxon>Pseudomonadati</taxon>
        <taxon>Pseudomonadota</taxon>
        <taxon>Gammaproteobacteria</taxon>
        <taxon>Enterobacterales</taxon>
        <taxon>Enterobacteriaceae</taxon>
        <taxon>Salmonella</taxon>
    </lineage>
</organism>
<feature type="chain" id="PRO_0000194559" description="HTH-type transcriptional activator RhaR">
    <location>
        <begin position="1"/>
        <end position="282"/>
    </location>
</feature>
<feature type="domain" description="HTH araC/xylS-type" evidence="1">
    <location>
        <begin position="179"/>
        <end position="277"/>
    </location>
</feature>
<feature type="DNA-binding region" description="H-T-H motif" evidence="1">
    <location>
        <begin position="196"/>
        <end position="217"/>
    </location>
</feature>
<feature type="DNA-binding region" description="H-T-H motif" evidence="1">
    <location>
        <begin position="244"/>
        <end position="267"/>
    </location>
</feature>
<feature type="site" description="Interaction with sigma-70" evidence="1">
    <location>
        <position position="246"/>
    </location>
</feature>
<name>RHAR_SALTY</name>
<protein>
    <recommendedName>
        <fullName evidence="1">HTH-type transcriptional activator RhaR</fullName>
    </recommendedName>
    <alternativeName>
        <fullName evidence="1">L-rhamnose operon transcriptional activator RhaR</fullName>
    </alternativeName>
</protein>
<reference key="1">
    <citation type="journal article" date="2001" name="Nature">
        <title>Complete genome sequence of Salmonella enterica serovar Typhimurium LT2.</title>
        <authorList>
            <person name="McClelland M."/>
            <person name="Sanderson K.E."/>
            <person name="Spieth J."/>
            <person name="Clifton S.W."/>
            <person name="Latreille P."/>
            <person name="Courtney L."/>
            <person name="Porwollik S."/>
            <person name="Ali J."/>
            <person name="Dante M."/>
            <person name="Du F."/>
            <person name="Hou S."/>
            <person name="Layman D."/>
            <person name="Leonard S."/>
            <person name="Nguyen C."/>
            <person name="Scott K."/>
            <person name="Holmes A."/>
            <person name="Grewal N."/>
            <person name="Mulvaney E."/>
            <person name="Ryan E."/>
            <person name="Sun H."/>
            <person name="Florea L."/>
            <person name="Miller W."/>
            <person name="Stoneking T."/>
            <person name="Nhan M."/>
            <person name="Waterston R."/>
            <person name="Wilson R.K."/>
        </authorList>
    </citation>
    <scope>NUCLEOTIDE SEQUENCE [LARGE SCALE GENOMIC DNA]</scope>
    <source>
        <strain>LT2 / SGSC1412 / ATCC 700720</strain>
    </source>
</reference>
<reference key="2">
    <citation type="journal article" date="1992" name="J. Biol. Chem.">
        <title>Mapping, cloning, expression, and sequencing of the rhaT gene, which encodes a novel L-rhamnose-H+ transport protein in Salmonella typhimurium and Escherichia coli.</title>
        <authorList>
            <person name="Tate C.G."/>
            <person name="Muiry J.A.R."/>
            <person name="Henderson P.J.F."/>
        </authorList>
    </citation>
    <scope>NUCLEOTIDE SEQUENCE [GENOMIC DNA] OF 177-282</scope>
    <source>
        <strain>C5</strain>
    </source>
</reference>
<keyword id="KW-0010">Activator</keyword>
<keyword id="KW-0963">Cytoplasm</keyword>
<keyword id="KW-0238">DNA-binding</keyword>
<keyword id="KW-1185">Reference proteome</keyword>
<keyword id="KW-0677">Repeat</keyword>
<keyword id="KW-0684">Rhamnose metabolism</keyword>
<keyword id="KW-0804">Transcription</keyword>
<keyword id="KW-0805">Transcription regulation</keyword>
<sequence>MANQLILLKKDFFTDEQQAVTVADRYPQDVFAEHTHEFCELVMVWRGNGLHVLNERPYRITRGDLFYIRAEDKHSYTSVNDLVLQNIIYCPERLKLNVNWQAMIPGFQGAQWHPHWRLGSMGMNQARQVINQLEHESNGRDPLANEMAELLFGQLVMTLKRHRYATDDLPATSRETLLDKLITALANSLECPFALDAFCQQEQCSERVLRQQFRAQTGMTINQYLRQVRICHAQYLLQHSPLMISEISMQCGFEDSNYFSVVFTRETGMTPSQWRHLSNQSD</sequence>
<dbReference type="EMBL" id="AE006468">
    <property type="protein sequence ID" value="AAL22889.1"/>
    <property type="molecule type" value="Genomic_DNA"/>
</dbReference>
<dbReference type="EMBL" id="M85157">
    <property type="status" value="NOT_ANNOTATED_CDS"/>
    <property type="molecule type" value="Genomic_DNA"/>
</dbReference>
<dbReference type="RefSeq" id="NP_462930.1">
    <property type="nucleotide sequence ID" value="NC_003197.2"/>
</dbReference>
<dbReference type="RefSeq" id="WP_000013290.1">
    <property type="nucleotide sequence ID" value="NC_003197.2"/>
</dbReference>
<dbReference type="SMR" id="P40865"/>
<dbReference type="STRING" id="99287.STM4049"/>
<dbReference type="PaxDb" id="99287-STM4049"/>
<dbReference type="GeneID" id="1255576"/>
<dbReference type="KEGG" id="stm:STM4049"/>
<dbReference type="PATRIC" id="fig|99287.12.peg.4266"/>
<dbReference type="HOGENOM" id="CLU_000445_88_5_6"/>
<dbReference type="OMA" id="ECGFDDS"/>
<dbReference type="PhylomeDB" id="P40865"/>
<dbReference type="BioCyc" id="SENT99287:STM4049-MONOMER"/>
<dbReference type="Proteomes" id="UP000001014">
    <property type="component" value="Chromosome"/>
</dbReference>
<dbReference type="GO" id="GO:0005737">
    <property type="term" value="C:cytoplasm"/>
    <property type="evidence" value="ECO:0007669"/>
    <property type="project" value="UniProtKB-SubCell"/>
</dbReference>
<dbReference type="GO" id="GO:0003700">
    <property type="term" value="F:DNA-binding transcription factor activity"/>
    <property type="evidence" value="ECO:0007669"/>
    <property type="project" value="UniProtKB-UniRule"/>
</dbReference>
<dbReference type="GO" id="GO:0043565">
    <property type="term" value="F:sequence-specific DNA binding"/>
    <property type="evidence" value="ECO:0007669"/>
    <property type="project" value="InterPro"/>
</dbReference>
<dbReference type="GO" id="GO:0045893">
    <property type="term" value="P:positive regulation of DNA-templated transcription"/>
    <property type="evidence" value="ECO:0007669"/>
    <property type="project" value="UniProtKB-UniRule"/>
</dbReference>
<dbReference type="GO" id="GO:0019299">
    <property type="term" value="P:rhamnose metabolic process"/>
    <property type="evidence" value="ECO:0007669"/>
    <property type="project" value="UniProtKB-UniRule"/>
</dbReference>
<dbReference type="CDD" id="cd06977">
    <property type="entry name" value="cupin_RhaR_RhaS-like_N"/>
    <property type="match status" value="1"/>
</dbReference>
<dbReference type="Gene3D" id="1.10.10.60">
    <property type="entry name" value="Homeodomain-like"/>
    <property type="match status" value="2"/>
</dbReference>
<dbReference type="Gene3D" id="2.60.120.10">
    <property type="entry name" value="Jelly Rolls"/>
    <property type="match status" value="1"/>
</dbReference>
<dbReference type="HAMAP" id="MF_01533">
    <property type="entry name" value="HTH_type_RhaR"/>
    <property type="match status" value="1"/>
</dbReference>
<dbReference type="InterPro" id="IPR003313">
    <property type="entry name" value="AraC-bd"/>
</dbReference>
<dbReference type="InterPro" id="IPR009057">
    <property type="entry name" value="Homeodomain-like_sf"/>
</dbReference>
<dbReference type="InterPro" id="IPR018060">
    <property type="entry name" value="HTH_AraC"/>
</dbReference>
<dbReference type="InterPro" id="IPR018062">
    <property type="entry name" value="HTH_AraC-typ_CS"/>
</dbReference>
<dbReference type="InterPro" id="IPR047220">
    <property type="entry name" value="RhaR_RhaS-like_N"/>
</dbReference>
<dbReference type="InterPro" id="IPR014710">
    <property type="entry name" value="RmlC-like_jellyroll"/>
</dbReference>
<dbReference type="InterPro" id="IPR011051">
    <property type="entry name" value="RmlC_Cupin_sf"/>
</dbReference>
<dbReference type="InterPro" id="IPR023699">
    <property type="entry name" value="Tscrpt_act_RhaR"/>
</dbReference>
<dbReference type="InterPro" id="IPR020449">
    <property type="entry name" value="Tscrpt_reg_AraC-type_HTH"/>
</dbReference>
<dbReference type="NCBIfam" id="NF010025">
    <property type="entry name" value="PRK13500.1"/>
    <property type="match status" value="1"/>
</dbReference>
<dbReference type="NCBIfam" id="NF010026">
    <property type="entry name" value="PRK13501.1"/>
    <property type="match status" value="1"/>
</dbReference>
<dbReference type="NCBIfam" id="NF010027">
    <property type="entry name" value="PRK13502.1"/>
    <property type="match status" value="1"/>
</dbReference>
<dbReference type="PANTHER" id="PTHR43280">
    <property type="entry name" value="ARAC-FAMILY TRANSCRIPTIONAL REGULATOR"/>
    <property type="match status" value="1"/>
</dbReference>
<dbReference type="PANTHER" id="PTHR43280:SF13">
    <property type="entry name" value="HTH-TYPE TRANSCRIPTIONAL ACTIVATOR RHAR"/>
    <property type="match status" value="1"/>
</dbReference>
<dbReference type="Pfam" id="PF02311">
    <property type="entry name" value="AraC_binding"/>
    <property type="match status" value="1"/>
</dbReference>
<dbReference type="Pfam" id="PF12833">
    <property type="entry name" value="HTH_18"/>
    <property type="match status" value="1"/>
</dbReference>
<dbReference type="PRINTS" id="PR00032">
    <property type="entry name" value="HTHARAC"/>
</dbReference>
<dbReference type="SMART" id="SM00342">
    <property type="entry name" value="HTH_ARAC"/>
    <property type="match status" value="1"/>
</dbReference>
<dbReference type="SUPFAM" id="SSF46689">
    <property type="entry name" value="Homeodomain-like"/>
    <property type="match status" value="1"/>
</dbReference>
<dbReference type="SUPFAM" id="SSF51182">
    <property type="entry name" value="RmlC-like cupins"/>
    <property type="match status" value="1"/>
</dbReference>
<dbReference type="PROSITE" id="PS00041">
    <property type="entry name" value="HTH_ARAC_FAMILY_1"/>
    <property type="match status" value="1"/>
</dbReference>
<dbReference type="PROSITE" id="PS01124">
    <property type="entry name" value="HTH_ARAC_FAMILY_2"/>
    <property type="match status" value="1"/>
</dbReference>
<proteinExistence type="inferred from homology"/>